<evidence type="ECO:0000250" key="1">
    <source>
        <dbReference type="UniProtKB" id="P00395"/>
    </source>
</evidence>
<evidence type="ECO:0000250" key="2">
    <source>
        <dbReference type="UniProtKB" id="P00396"/>
    </source>
</evidence>
<evidence type="ECO:0000250" key="3">
    <source>
        <dbReference type="UniProtKB" id="P00401"/>
    </source>
</evidence>
<evidence type="ECO:0000305" key="4"/>
<sequence>MFINRWLFSTNHKDIGTLYMIFGAWAGMVGTGLSILIRAELGQPGSLLGDDQIYNVVVTAHAFVMIFFMVMPIMIGGFGNWLVPLMIGAPDMAFPRMNNMSFWLLPPSFLLLLASSMVEAGAGTGWTVYPPLAGNLAHAGASVDLTIFSLHLAGVSSILGAINFITTIINMKPPAITQYQTPLFVWSVMITAVLLLLSLPVLAAGITMLLTDRNLNTTFFDPAGGGDPILYQHLFWFFGHPEVYILILPGFGMISHIVTYYSGKKEPFGYMGMVWAMMSIGFLGFIVWAHHMFTVGMDVDTRAYFTSATMIIAIPTGVKVFSWLATLHGGNIKWSPAMLWALGFIFLFTIGGLTGIVLSNSSLDIVLHDTYYVVAHFHYVLSMGAVFAIMGGFVHWFPLFTGYTLNDTWAKIHFTIMFVGVNMTFFPQHFLGLAGMPRRYSDYPDAYTTWNTISSMGSFISLTAVILMVYMIWEALASKRLVKSVPLTTTNLEWMHGCPPPFHTFEEPVFIKSPQL</sequence>
<reference key="1">
    <citation type="journal article" date="2004" name="J. Mammal. Evol.">
        <title>DNA data support a rapid radiation of pocket gopher genera.</title>
        <authorList>
            <person name="Spradling T.A."/>
            <person name="Brant S.V."/>
            <person name="Hafner M.S."/>
            <person name="Dickerson C.J."/>
        </authorList>
    </citation>
    <scope>NUCLEOTIDE SEQUENCE [GENOMIC DNA]</scope>
</reference>
<organism>
    <name type="scientific">Geomys breviceps</name>
    <name type="common">Baird's pocket gopher</name>
    <dbReference type="NCBI Taxonomy" id="32529"/>
    <lineage>
        <taxon>Eukaryota</taxon>
        <taxon>Metazoa</taxon>
        <taxon>Chordata</taxon>
        <taxon>Craniata</taxon>
        <taxon>Vertebrata</taxon>
        <taxon>Euteleostomi</taxon>
        <taxon>Mammalia</taxon>
        <taxon>Eutheria</taxon>
        <taxon>Euarchontoglires</taxon>
        <taxon>Glires</taxon>
        <taxon>Rodentia</taxon>
        <taxon>Castorimorpha</taxon>
        <taxon>Geomyidae</taxon>
        <taxon>Geomys</taxon>
    </lineage>
</organism>
<protein>
    <recommendedName>
        <fullName>Cytochrome c oxidase subunit 1</fullName>
        <ecNumber>7.1.1.9</ecNumber>
    </recommendedName>
    <alternativeName>
        <fullName>Cytochrome c oxidase polypeptide I</fullName>
    </alternativeName>
</protein>
<comment type="function">
    <text evidence="3">Component of the cytochrome c oxidase, the last enzyme in the mitochondrial electron transport chain which drives oxidative phosphorylation. The respiratory chain contains 3 multisubunit complexes succinate dehydrogenase (complex II, CII), ubiquinol-cytochrome c oxidoreductase (cytochrome b-c1 complex, complex III, CIII) and cytochrome c oxidase (complex IV, CIV), that cooperate to transfer electrons derived from NADH and succinate to molecular oxygen, creating an electrochemical gradient over the inner membrane that drives transmembrane transport and the ATP synthase. Cytochrome c oxidase is the component of the respiratory chain that catalyzes the reduction of oxygen to water. Electrons originating from reduced cytochrome c in the intermembrane space (IMS) are transferred via the dinuclear copper A center (CU(A)) of subunit 2 and heme A of subunit 1 to the active site in subunit 1, a binuclear center (BNC) formed by heme A3 and copper B (CU(B)). The BNC reduces molecular oxygen to 2 water molecules using 4 electrons from cytochrome c in the IMS and 4 protons from the mitochondrial matrix.</text>
</comment>
<comment type="catalytic activity">
    <reaction evidence="3">
        <text>4 Fe(II)-[cytochrome c] + O2 + 8 H(+)(in) = 4 Fe(III)-[cytochrome c] + 2 H2O + 4 H(+)(out)</text>
        <dbReference type="Rhea" id="RHEA:11436"/>
        <dbReference type="Rhea" id="RHEA-COMP:10350"/>
        <dbReference type="Rhea" id="RHEA-COMP:14399"/>
        <dbReference type="ChEBI" id="CHEBI:15377"/>
        <dbReference type="ChEBI" id="CHEBI:15378"/>
        <dbReference type="ChEBI" id="CHEBI:15379"/>
        <dbReference type="ChEBI" id="CHEBI:29033"/>
        <dbReference type="ChEBI" id="CHEBI:29034"/>
        <dbReference type="EC" id="7.1.1.9"/>
    </reaction>
    <physiologicalReaction direction="left-to-right" evidence="3">
        <dbReference type="Rhea" id="RHEA:11437"/>
    </physiologicalReaction>
</comment>
<comment type="cofactor">
    <cofactor evidence="2">
        <name>heme</name>
        <dbReference type="ChEBI" id="CHEBI:30413"/>
    </cofactor>
    <text evidence="2">Binds 2 heme A groups non-covalently per subunit.</text>
</comment>
<comment type="cofactor">
    <cofactor evidence="2">
        <name>Cu cation</name>
        <dbReference type="ChEBI" id="CHEBI:23378"/>
    </cofactor>
    <text evidence="2">Binds a copper B center.</text>
</comment>
<comment type="pathway">
    <text evidence="3">Energy metabolism; oxidative phosphorylation.</text>
</comment>
<comment type="subunit">
    <text evidence="1 2">Component of the cytochrome c oxidase (complex IV, CIV), a multisubunit enzyme composed of 14 subunits. The complex is composed of a catalytic core of 3 subunits MT-CO1, MT-CO2 and MT-CO3, encoded in the mitochondrial DNA, and 11 supernumerary subunits COX4I, COX5A, COX5B, COX6A, COX6B, COX6C, COX7A, COX7B, COX7C, COX8 and NDUFA4, which are encoded in the nuclear genome. The complex exists as a monomer or a dimer and forms supercomplexes (SCs) in the inner mitochondrial membrane with NADH-ubiquinone oxidoreductase (complex I, CI) and ubiquinol-cytochrome c oxidoreductase (cytochrome b-c1 complex, complex III, CIII), resulting in different assemblies (supercomplex SCI(1)III(2)IV(1) and megacomplex MCI(2)III(2)IV(2)) (By similarity). As a newly synthesized protein, rapidly incorporates into a multi-subunit assembly intermediate in the inner membrane, called MITRAC (mitochondrial translation regulation assembly intermediate of cytochrome c oxidase) complex, whose core components are COA3/MITRAC12 and COX14. Within the MITRAC complex, interacts with COA3 and with SMIM20/MITRAC7; the interaction with SMIM20 stabilizes the newly synthesized MT-CO1 and prevents its premature turnover. Interacts with TMEM177 in a COX20-dependent manner (By similarity).</text>
</comment>
<comment type="subcellular location">
    <subcellularLocation>
        <location evidence="2">Mitochondrion inner membrane</location>
        <topology evidence="2">Multi-pass membrane protein</topology>
    </subcellularLocation>
</comment>
<comment type="similarity">
    <text evidence="4">Belongs to the heme-copper respiratory oxidase family.</text>
</comment>
<proteinExistence type="inferred from homology"/>
<accession>Q6EGH9</accession>
<name>COX1_GEOBE</name>
<keyword id="KW-0106">Calcium</keyword>
<keyword id="KW-0186">Copper</keyword>
<keyword id="KW-0249">Electron transport</keyword>
<keyword id="KW-0349">Heme</keyword>
<keyword id="KW-0408">Iron</keyword>
<keyword id="KW-0460">Magnesium</keyword>
<keyword id="KW-0472">Membrane</keyword>
<keyword id="KW-0479">Metal-binding</keyword>
<keyword id="KW-0496">Mitochondrion</keyword>
<keyword id="KW-0999">Mitochondrion inner membrane</keyword>
<keyword id="KW-0679">Respiratory chain</keyword>
<keyword id="KW-0915">Sodium</keyword>
<keyword id="KW-1278">Translocase</keyword>
<keyword id="KW-0812">Transmembrane</keyword>
<keyword id="KW-1133">Transmembrane helix</keyword>
<keyword id="KW-0813">Transport</keyword>
<feature type="chain" id="PRO_0000183336" description="Cytochrome c oxidase subunit 1">
    <location>
        <begin position="1"/>
        <end position="516"/>
    </location>
</feature>
<feature type="topological domain" description="Mitochondrial matrix" evidence="2">
    <location>
        <begin position="1"/>
        <end position="11"/>
    </location>
</feature>
<feature type="transmembrane region" description="Helical; Name=I" evidence="2">
    <location>
        <begin position="12"/>
        <end position="40"/>
    </location>
</feature>
<feature type="topological domain" description="Mitochondrial intermembrane" evidence="2">
    <location>
        <begin position="41"/>
        <end position="50"/>
    </location>
</feature>
<feature type="transmembrane region" description="Helical; Name=II" evidence="2">
    <location>
        <begin position="51"/>
        <end position="86"/>
    </location>
</feature>
<feature type="topological domain" description="Mitochondrial matrix" evidence="2">
    <location>
        <begin position="87"/>
        <end position="94"/>
    </location>
</feature>
<feature type="transmembrane region" description="Helical; Name=III" evidence="2">
    <location>
        <begin position="95"/>
        <end position="117"/>
    </location>
</feature>
<feature type="topological domain" description="Mitochondrial intermembrane" evidence="2">
    <location>
        <begin position="118"/>
        <end position="140"/>
    </location>
</feature>
<feature type="transmembrane region" description="Helical; Name=IV" evidence="2">
    <location>
        <begin position="141"/>
        <end position="170"/>
    </location>
</feature>
<feature type="topological domain" description="Mitochondrial matrix" evidence="2">
    <location>
        <begin position="171"/>
        <end position="182"/>
    </location>
</feature>
<feature type="transmembrane region" description="Helical; Name=V" evidence="2">
    <location>
        <begin position="183"/>
        <end position="212"/>
    </location>
</feature>
<feature type="topological domain" description="Mitochondrial intermembrane" evidence="2">
    <location>
        <begin position="213"/>
        <end position="227"/>
    </location>
</feature>
<feature type="transmembrane region" description="Helical; Name=VI" evidence="2">
    <location>
        <begin position="228"/>
        <end position="261"/>
    </location>
</feature>
<feature type="topological domain" description="Mitochondrial matrix" evidence="2">
    <location>
        <begin position="262"/>
        <end position="269"/>
    </location>
</feature>
<feature type="transmembrane region" description="Helical; Name=VII" evidence="2">
    <location>
        <begin position="270"/>
        <end position="286"/>
    </location>
</feature>
<feature type="topological domain" description="Mitochondrial intermembrane" evidence="2">
    <location>
        <begin position="287"/>
        <end position="298"/>
    </location>
</feature>
<feature type="transmembrane region" description="Helical; Name=VIII" evidence="2">
    <location>
        <begin position="299"/>
        <end position="327"/>
    </location>
</feature>
<feature type="topological domain" description="Mitochondrial matrix" evidence="2">
    <location>
        <begin position="328"/>
        <end position="335"/>
    </location>
</feature>
<feature type="transmembrane region" description="Helical; Name=IX" evidence="2">
    <location>
        <begin position="336"/>
        <end position="357"/>
    </location>
</feature>
<feature type="topological domain" description="Mitochondrial intermembrane" evidence="2">
    <location>
        <begin position="358"/>
        <end position="370"/>
    </location>
</feature>
<feature type="transmembrane region" description="Helical; Name=X" evidence="2">
    <location>
        <begin position="371"/>
        <end position="400"/>
    </location>
</feature>
<feature type="topological domain" description="Mitochondrial matrix" evidence="2">
    <location>
        <begin position="401"/>
        <end position="406"/>
    </location>
</feature>
<feature type="transmembrane region" description="Helical; Name=XI" evidence="2">
    <location>
        <begin position="407"/>
        <end position="433"/>
    </location>
</feature>
<feature type="topological domain" description="Mitochondrial intermembrane" evidence="2">
    <location>
        <begin position="434"/>
        <end position="446"/>
    </location>
</feature>
<feature type="transmembrane region" description="Helical; Name=XII" evidence="2">
    <location>
        <begin position="447"/>
        <end position="478"/>
    </location>
</feature>
<feature type="topological domain" description="Mitochondrial matrix" evidence="2">
    <location>
        <begin position="479"/>
        <end position="516"/>
    </location>
</feature>
<feature type="binding site" evidence="2">
    <location>
        <position position="40"/>
    </location>
    <ligand>
        <name>Na(+)</name>
        <dbReference type="ChEBI" id="CHEBI:29101"/>
    </ligand>
</feature>
<feature type="binding site" evidence="2">
    <location>
        <position position="45"/>
    </location>
    <ligand>
        <name>Na(+)</name>
        <dbReference type="ChEBI" id="CHEBI:29101"/>
    </ligand>
</feature>
<feature type="binding site" description="axial binding residue" evidence="2">
    <location>
        <position position="61"/>
    </location>
    <ligand>
        <name>Fe(II)-heme a</name>
        <dbReference type="ChEBI" id="CHEBI:61715"/>
        <note>low-spin</note>
    </ligand>
    <ligandPart>
        <name>Fe</name>
        <dbReference type="ChEBI" id="CHEBI:18248"/>
    </ligandPart>
</feature>
<feature type="binding site" evidence="2">
    <location>
        <position position="240"/>
    </location>
    <ligand>
        <name>Cu cation</name>
        <dbReference type="ChEBI" id="CHEBI:23378"/>
        <label>B</label>
    </ligand>
</feature>
<feature type="binding site" evidence="2">
    <location>
        <position position="244"/>
    </location>
    <ligand>
        <name>O2</name>
        <dbReference type="ChEBI" id="CHEBI:15379"/>
    </ligand>
</feature>
<feature type="binding site" evidence="2">
    <location>
        <position position="290"/>
    </location>
    <ligand>
        <name>Cu cation</name>
        <dbReference type="ChEBI" id="CHEBI:23378"/>
        <label>B</label>
    </ligand>
</feature>
<feature type="binding site" evidence="2">
    <location>
        <position position="291"/>
    </location>
    <ligand>
        <name>Cu cation</name>
        <dbReference type="ChEBI" id="CHEBI:23378"/>
        <label>B</label>
    </ligand>
</feature>
<feature type="binding site" evidence="2">
    <location>
        <position position="368"/>
    </location>
    <ligand>
        <name>Mg(2+)</name>
        <dbReference type="ChEBI" id="CHEBI:18420"/>
        <note>ligand shared with MT-CO2</note>
    </ligand>
</feature>
<feature type="binding site" evidence="2">
    <location>
        <position position="369"/>
    </location>
    <ligand>
        <name>Mg(2+)</name>
        <dbReference type="ChEBI" id="CHEBI:18420"/>
        <note>ligand shared with MT-CO2</note>
    </ligand>
</feature>
<feature type="binding site" description="axial binding residue" evidence="2">
    <location>
        <position position="376"/>
    </location>
    <ligand>
        <name>heme a3</name>
        <dbReference type="ChEBI" id="CHEBI:83282"/>
        <note>high-spin</note>
    </ligand>
    <ligandPart>
        <name>Fe</name>
        <dbReference type="ChEBI" id="CHEBI:18248"/>
    </ligandPart>
</feature>
<feature type="binding site" description="axial binding residue" evidence="2">
    <location>
        <position position="378"/>
    </location>
    <ligand>
        <name>Fe(II)-heme a</name>
        <dbReference type="ChEBI" id="CHEBI:61715"/>
        <note>low-spin</note>
    </ligand>
    <ligandPart>
        <name>Fe</name>
        <dbReference type="ChEBI" id="CHEBI:18248"/>
    </ligandPart>
</feature>
<feature type="binding site" evidence="2">
    <location>
        <position position="441"/>
    </location>
    <ligand>
        <name>Na(+)</name>
        <dbReference type="ChEBI" id="CHEBI:29101"/>
    </ligand>
</feature>
<feature type="cross-link" description="1'-histidyl-3'-tyrosine (His-Tyr)" evidence="2">
    <location>
        <begin position="240"/>
        <end position="244"/>
    </location>
</feature>
<gene>
    <name type="primary">MT-CO1</name>
    <name type="synonym">COI</name>
    <name type="synonym">COXI</name>
    <name type="synonym">MTCO1</name>
</gene>
<geneLocation type="mitochondrion"/>
<dbReference type="EC" id="7.1.1.9"/>
<dbReference type="EMBL" id="AY331085">
    <property type="protein sequence ID" value="AAR02586.1"/>
    <property type="molecule type" value="Genomic_DNA"/>
</dbReference>
<dbReference type="SMR" id="Q6EGH9"/>
<dbReference type="UniPathway" id="UPA00705"/>
<dbReference type="GO" id="GO:0005743">
    <property type="term" value="C:mitochondrial inner membrane"/>
    <property type="evidence" value="ECO:0007669"/>
    <property type="project" value="UniProtKB-SubCell"/>
</dbReference>
<dbReference type="GO" id="GO:0045277">
    <property type="term" value="C:respiratory chain complex IV"/>
    <property type="evidence" value="ECO:0000250"/>
    <property type="project" value="UniProtKB"/>
</dbReference>
<dbReference type="GO" id="GO:0004129">
    <property type="term" value="F:cytochrome-c oxidase activity"/>
    <property type="evidence" value="ECO:0007669"/>
    <property type="project" value="UniProtKB-EC"/>
</dbReference>
<dbReference type="GO" id="GO:0020037">
    <property type="term" value="F:heme binding"/>
    <property type="evidence" value="ECO:0007669"/>
    <property type="project" value="InterPro"/>
</dbReference>
<dbReference type="GO" id="GO:0046872">
    <property type="term" value="F:metal ion binding"/>
    <property type="evidence" value="ECO:0007669"/>
    <property type="project" value="UniProtKB-KW"/>
</dbReference>
<dbReference type="GO" id="GO:0015990">
    <property type="term" value="P:electron transport coupled proton transport"/>
    <property type="evidence" value="ECO:0007669"/>
    <property type="project" value="TreeGrafter"/>
</dbReference>
<dbReference type="GO" id="GO:0006123">
    <property type="term" value="P:mitochondrial electron transport, cytochrome c to oxygen"/>
    <property type="evidence" value="ECO:0007669"/>
    <property type="project" value="TreeGrafter"/>
</dbReference>
<dbReference type="CDD" id="cd01663">
    <property type="entry name" value="Cyt_c_Oxidase_I"/>
    <property type="match status" value="1"/>
</dbReference>
<dbReference type="FunFam" id="1.20.210.10:FF:000001">
    <property type="entry name" value="Cytochrome c oxidase subunit 1"/>
    <property type="match status" value="1"/>
</dbReference>
<dbReference type="Gene3D" id="1.20.210.10">
    <property type="entry name" value="Cytochrome c oxidase-like, subunit I domain"/>
    <property type="match status" value="1"/>
</dbReference>
<dbReference type="InterPro" id="IPR023616">
    <property type="entry name" value="Cyt_c_oxase-like_su1_dom"/>
</dbReference>
<dbReference type="InterPro" id="IPR036927">
    <property type="entry name" value="Cyt_c_oxase-like_su1_sf"/>
</dbReference>
<dbReference type="InterPro" id="IPR000883">
    <property type="entry name" value="Cyt_C_Oxase_1"/>
</dbReference>
<dbReference type="InterPro" id="IPR023615">
    <property type="entry name" value="Cyt_c_Oxase_su1_BS"/>
</dbReference>
<dbReference type="InterPro" id="IPR033944">
    <property type="entry name" value="Cyt_c_oxase_su1_dom"/>
</dbReference>
<dbReference type="PANTHER" id="PTHR10422">
    <property type="entry name" value="CYTOCHROME C OXIDASE SUBUNIT 1"/>
    <property type="match status" value="1"/>
</dbReference>
<dbReference type="PANTHER" id="PTHR10422:SF18">
    <property type="entry name" value="CYTOCHROME C OXIDASE SUBUNIT 1"/>
    <property type="match status" value="1"/>
</dbReference>
<dbReference type="Pfam" id="PF00115">
    <property type="entry name" value="COX1"/>
    <property type="match status" value="1"/>
</dbReference>
<dbReference type="PRINTS" id="PR01165">
    <property type="entry name" value="CYCOXIDASEI"/>
</dbReference>
<dbReference type="SUPFAM" id="SSF81442">
    <property type="entry name" value="Cytochrome c oxidase subunit I-like"/>
    <property type="match status" value="1"/>
</dbReference>
<dbReference type="PROSITE" id="PS50855">
    <property type="entry name" value="COX1"/>
    <property type="match status" value="1"/>
</dbReference>
<dbReference type="PROSITE" id="PS00077">
    <property type="entry name" value="COX1_CUB"/>
    <property type="match status" value="1"/>
</dbReference>